<accession>C1DLA8</accession>
<feature type="chain" id="PRO_1000215883" description="Inositol 2-dehydrogenase">
    <location>
        <begin position="1"/>
        <end position="338"/>
    </location>
</feature>
<protein>
    <recommendedName>
        <fullName evidence="1">Inositol 2-dehydrogenase</fullName>
        <ecNumber evidence="1">1.1.1.18</ecNumber>
    </recommendedName>
    <alternativeName>
        <fullName evidence="1">Myo-inositol 2-dehydrogenase</fullName>
        <shortName evidence="1">MI 2-dehydrogenase</shortName>
    </alternativeName>
</protein>
<gene>
    <name evidence="1" type="primary">iolG</name>
    <name type="ordered locus">Avin_50110</name>
</gene>
<proteinExistence type="inferred from homology"/>
<evidence type="ECO:0000255" key="1">
    <source>
        <dbReference type="HAMAP-Rule" id="MF_01671"/>
    </source>
</evidence>
<sequence>MTLNIGVIGTGAIGQDHIRRCSFALSGAKVVAVNDINLEQAKKVVNDLGIGAEVYADAHELINAANVEAILVTSWGPTHEEFVLAAIKAGKPVFCEKPLAVTAQGCKNIVDAETAFGKRLVQVGFMRPYDQGYRALKAVIDSGRIGEPLMLHCAHRNARVGQAYATDMAITDTLIHEINVLSWLLDDHYVSAQVIFPRKSARALAHLKDPQIVLLETAKGTRIDVEVFVNCQYGYDIQCEVVGETGIARLPEPSSVQLRSEARLSNEILVDWKDRFIAAYDVELQDFIDAVGAGRLTGPSAWDGYTAAVTADACVAAQGSGKVEPIVLPERPAFYAPA</sequence>
<reference key="1">
    <citation type="journal article" date="2009" name="J. Bacteriol.">
        <title>Genome sequence of Azotobacter vinelandii, an obligate aerobe specialized to support diverse anaerobic metabolic processes.</title>
        <authorList>
            <person name="Setubal J.C."/>
            <person name="Dos Santos P."/>
            <person name="Goldman B.S."/>
            <person name="Ertesvaag H."/>
            <person name="Espin G."/>
            <person name="Rubio L.M."/>
            <person name="Valla S."/>
            <person name="Almeida N.F."/>
            <person name="Balasubramanian D."/>
            <person name="Cromes L."/>
            <person name="Curatti L."/>
            <person name="Du Z."/>
            <person name="Godsy E."/>
            <person name="Goodner B."/>
            <person name="Hellner-Burris K."/>
            <person name="Hernandez J.A."/>
            <person name="Houmiel K."/>
            <person name="Imperial J."/>
            <person name="Kennedy C."/>
            <person name="Larson T.J."/>
            <person name="Latreille P."/>
            <person name="Ligon L.S."/>
            <person name="Lu J."/>
            <person name="Maerk M."/>
            <person name="Miller N.M."/>
            <person name="Norton S."/>
            <person name="O'Carroll I.P."/>
            <person name="Paulsen I."/>
            <person name="Raulfs E.C."/>
            <person name="Roemer R."/>
            <person name="Rosser J."/>
            <person name="Segura D."/>
            <person name="Slater S."/>
            <person name="Stricklin S.L."/>
            <person name="Studholme D.J."/>
            <person name="Sun J."/>
            <person name="Viana C.J."/>
            <person name="Wallin E."/>
            <person name="Wang B."/>
            <person name="Wheeler C."/>
            <person name="Zhu H."/>
            <person name="Dean D.R."/>
            <person name="Dixon R."/>
            <person name="Wood D."/>
        </authorList>
    </citation>
    <scope>NUCLEOTIDE SEQUENCE [LARGE SCALE GENOMIC DNA]</scope>
    <source>
        <strain>DJ / ATCC BAA-1303</strain>
    </source>
</reference>
<name>IOLG_AZOVD</name>
<organism>
    <name type="scientific">Azotobacter vinelandii (strain DJ / ATCC BAA-1303)</name>
    <dbReference type="NCBI Taxonomy" id="322710"/>
    <lineage>
        <taxon>Bacteria</taxon>
        <taxon>Pseudomonadati</taxon>
        <taxon>Pseudomonadota</taxon>
        <taxon>Gammaproteobacteria</taxon>
        <taxon>Pseudomonadales</taxon>
        <taxon>Pseudomonadaceae</taxon>
        <taxon>Azotobacter</taxon>
    </lineage>
</organism>
<comment type="function">
    <text evidence="1">Involved in the oxidation of myo-inositol (MI) to 2-keto-myo-inositol (2KMI or 2-inosose).</text>
</comment>
<comment type="catalytic activity">
    <reaction evidence="1">
        <text>myo-inositol + NAD(+) = scyllo-inosose + NADH + H(+)</text>
        <dbReference type="Rhea" id="RHEA:16949"/>
        <dbReference type="ChEBI" id="CHEBI:15378"/>
        <dbReference type="ChEBI" id="CHEBI:17268"/>
        <dbReference type="ChEBI" id="CHEBI:17811"/>
        <dbReference type="ChEBI" id="CHEBI:57540"/>
        <dbReference type="ChEBI" id="CHEBI:57945"/>
        <dbReference type="EC" id="1.1.1.18"/>
    </reaction>
</comment>
<comment type="subunit">
    <text evidence="1">Homotetramer.</text>
</comment>
<comment type="similarity">
    <text evidence="1">Belongs to the Gfo/Idh/MocA family.</text>
</comment>
<dbReference type="EC" id="1.1.1.18" evidence="1"/>
<dbReference type="EMBL" id="CP001157">
    <property type="protein sequence ID" value="ACO81101.1"/>
    <property type="molecule type" value="Genomic_DNA"/>
</dbReference>
<dbReference type="RefSeq" id="WP_012703454.1">
    <property type="nucleotide sequence ID" value="NC_012560.1"/>
</dbReference>
<dbReference type="SMR" id="C1DLA8"/>
<dbReference type="STRING" id="322710.Avin_50110"/>
<dbReference type="EnsemblBacteria" id="ACO81101">
    <property type="protein sequence ID" value="ACO81101"/>
    <property type="gene ID" value="Avin_50110"/>
</dbReference>
<dbReference type="GeneID" id="88187850"/>
<dbReference type="KEGG" id="avn:Avin_50110"/>
<dbReference type="eggNOG" id="COG0673">
    <property type="taxonomic scope" value="Bacteria"/>
</dbReference>
<dbReference type="HOGENOM" id="CLU_023194_0_1_6"/>
<dbReference type="OrthoDB" id="9801953at2"/>
<dbReference type="Proteomes" id="UP000002424">
    <property type="component" value="Chromosome"/>
</dbReference>
<dbReference type="GO" id="GO:0050112">
    <property type="term" value="F:inositol 2-dehydrogenase (NAD+) activity"/>
    <property type="evidence" value="ECO:0007669"/>
    <property type="project" value="UniProtKB-UniRule"/>
</dbReference>
<dbReference type="GO" id="GO:0000166">
    <property type="term" value="F:nucleotide binding"/>
    <property type="evidence" value="ECO:0007669"/>
    <property type="project" value="InterPro"/>
</dbReference>
<dbReference type="GO" id="GO:0019310">
    <property type="term" value="P:inositol catabolic process"/>
    <property type="evidence" value="ECO:0007669"/>
    <property type="project" value="UniProtKB-UniRule"/>
</dbReference>
<dbReference type="Gene3D" id="3.30.360.10">
    <property type="entry name" value="Dihydrodipicolinate Reductase, domain 2"/>
    <property type="match status" value="1"/>
</dbReference>
<dbReference type="Gene3D" id="3.40.50.720">
    <property type="entry name" value="NAD(P)-binding Rossmann-like Domain"/>
    <property type="match status" value="1"/>
</dbReference>
<dbReference type="HAMAP" id="MF_01671">
    <property type="entry name" value="IolG"/>
    <property type="match status" value="1"/>
</dbReference>
<dbReference type="InterPro" id="IPR050424">
    <property type="entry name" value="Gfo-Idh-MocA_inositol_DH"/>
</dbReference>
<dbReference type="InterPro" id="IPR004104">
    <property type="entry name" value="Gfo/Idh/MocA-like_OxRdtase_C"/>
</dbReference>
<dbReference type="InterPro" id="IPR000683">
    <property type="entry name" value="Gfo/Idh/MocA-like_OxRdtase_N"/>
</dbReference>
<dbReference type="InterPro" id="IPR023794">
    <property type="entry name" value="MI/DCI_dehydrogenase"/>
</dbReference>
<dbReference type="InterPro" id="IPR036291">
    <property type="entry name" value="NAD(P)-bd_dom_sf"/>
</dbReference>
<dbReference type="PANTHER" id="PTHR43593">
    <property type="match status" value="1"/>
</dbReference>
<dbReference type="PANTHER" id="PTHR43593:SF1">
    <property type="entry name" value="INOSITOL 2-DEHYDROGENASE"/>
    <property type="match status" value="1"/>
</dbReference>
<dbReference type="Pfam" id="PF01408">
    <property type="entry name" value="GFO_IDH_MocA"/>
    <property type="match status" value="1"/>
</dbReference>
<dbReference type="Pfam" id="PF02894">
    <property type="entry name" value="GFO_IDH_MocA_C"/>
    <property type="match status" value="1"/>
</dbReference>
<dbReference type="SUPFAM" id="SSF55347">
    <property type="entry name" value="Glyceraldehyde-3-phosphate dehydrogenase-like, C-terminal domain"/>
    <property type="match status" value="1"/>
</dbReference>
<dbReference type="SUPFAM" id="SSF51735">
    <property type="entry name" value="NAD(P)-binding Rossmann-fold domains"/>
    <property type="match status" value="1"/>
</dbReference>
<keyword id="KW-0520">NAD</keyword>
<keyword id="KW-0560">Oxidoreductase</keyword>